<comment type="function">
    <text evidence="1">Catalyzes the synthesis of the hydroxymethylpyrimidine phosphate (HMP-P) moiety of thiamine from aminoimidazole ribotide (AIR) in a radical S-adenosyl-L-methionine (SAM)-dependent reaction.</text>
</comment>
<comment type="catalytic activity">
    <reaction evidence="1">
        <text>5-amino-1-(5-phospho-beta-D-ribosyl)imidazole + S-adenosyl-L-methionine = 4-amino-2-methyl-5-(phosphooxymethyl)pyrimidine + CO + 5'-deoxyadenosine + formate + L-methionine + 3 H(+)</text>
        <dbReference type="Rhea" id="RHEA:24840"/>
        <dbReference type="ChEBI" id="CHEBI:15378"/>
        <dbReference type="ChEBI" id="CHEBI:15740"/>
        <dbReference type="ChEBI" id="CHEBI:17245"/>
        <dbReference type="ChEBI" id="CHEBI:17319"/>
        <dbReference type="ChEBI" id="CHEBI:57844"/>
        <dbReference type="ChEBI" id="CHEBI:58354"/>
        <dbReference type="ChEBI" id="CHEBI:59789"/>
        <dbReference type="ChEBI" id="CHEBI:137981"/>
        <dbReference type="EC" id="4.1.99.17"/>
    </reaction>
</comment>
<comment type="cofactor">
    <cofactor evidence="1">
        <name>[4Fe-4S] cluster</name>
        <dbReference type="ChEBI" id="CHEBI:49883"/>
    </cofactor>
    <text evidence="1">Binds 1 [4Fe-4S] cluster per subunit. The cluster is coordinated with 3 cysteines and an exchangeable S-adenosyl-L-methionine.</text>
</comment>
<comment type="pathway">
    <text evidence="1">Cofactor biosynthesis; thiamine diphosphate biosynthesis.</text>
</comment>
<comment type="subunit">
    <text evidence="1">Homodimer.</text>
</comment>
<comment type="similarity">
    <text evidence="1">Belongs to the ThiC family.</text>
</comment>
<gene>
    <name evidence="1" type="primary">thiC</name>
    <name type="ordered locus">SFV_4066</name>
</gene>
<keyword id="KW-0004">4Fe-4S</keyword>
<keyword id="KW-0408">Iron</keyword>
<keyword id="KW-0411">Iron-sulfur</keyword>
<keyword id="KW-0456">Lyase</keyword>
<keyword id="KW-0479">Metal-binding</keyword>
<keyword id="KW-0949">S-adenosyl-L-methionine</keyword>
<keyword id="KW-0784">Thiamine biosynthesis</keyword>
<keyword id="KW-0862">Zinc</keyword>
<proteinExistence type="inferred from homology"/>
<dbReference type="EC" id="4.1.99.17" evidence="1"/>
<dbReference type="EMBL" id="CP000266">
    <property type="protein sequence ID" value="ABF06059.1"/>
    <property type="molecule type" value="Genomic_DNA"/>
</dbReference>
<dbReference type="RefSeq" id="WP_001276920.1">
    <property type="nucleotide sequence ID" value="NC_008258.1"/>
</dbReference>
<dbReference type="SMR" id="Q0SY06"/>
<dbReference type="KEGG" id="sfv:SFV_4066"/>
<dbReference type="HOGENOM" id="CLU_013181_2_1_6"/>
<dbReference type="UniPathway" id="UPA00060"/>
<dbReference type="Proteomes" id="UP000000659">
    <property type="component" value="Chromosome"/>
</dbReference>
<dbReference type="GO" id="GO:0005829">
    <property type="term" value="C:cytosol"/>
    <property type="evidence" value="ECO:0007669"/>
    <property type="project" value="TreeGrafter"/>
</dbReference>
<dbReference type="GO" id="GO:0051539">
    <property type="term" value="F:4 iron, 4 sulfur cluster binding"/>
    <property type="evidence" value="ECO:0007669"/>
    <property type="project" value="UniProtKB-KW"/>
</dbReference>
<dbReference type="GO" id="GO:0016830">
    <property type="term" value="F:carbon-carbon lyase activity"/>
    <property type="evidence" value="ECO:0007669"/>
    <property type="project" value="InterPro"/>
</dbReference>
<dbReference type="GO" id="GO:0008270">
    <property type="term" value="F:zinc ion binding"/>
    <property type="evidence" value="ECO:0007669"/>
    <property type="project" value="UniProtKB-UniRule"/>
</dbReference>
<dbReference type="GO" id="GO:0009228">
    <property type="term" value="P:thiamine biosynthetic process"/>
    <property type="evidence" value="ECO:0007669"/>
    <property type="project" value="UniProtKB-KW"/>
</dbReference>
<dbReference type="GO" id="GO:0009229">
    <property type="term" value="P:thiamine diphosphate biosynthetic process"/>
    <property type="evidence" value="ECO:0007669"/>
    <property type="project" value="UniProtKB-UniRule"/>
</dbReference>
<dbReference type="FunFam" id="3.20.20.540:FF:000001">
    <property type="entry name" value="Phosphomethylpyrimidine synthase"/>
    <property type="match status" value="1"/>
</dbReference>
<dbReference type="Gene3D" id="6.10.250.620">
    <property type="match status" value="1"/>
</dbReference>
<dbReference type="Gene3D" id="3.20.20.540">
    <property type="entry name" value="Radical SAM ThiC family, central domain"/>
    <property type="match status" value="1"/>
</dbReference>
<dbReference type="HAMAP" id="MF_00089">
    <property type="entry name" value="ThiC"/>
    <property type="match status" value="1"/>
</dbReference>
<dbReference type="InterPro" id="IPR037509">
    <property type="entry name" value="ThiC"/>
</dbReference>
<dbReference type="InterPro" id="IPR025747">
    <property type="entry name" value="ThiC-associated_dom"/>
</dbReference>
<dbReference type="InterPro" id="IPR038521">
    <property type="entry name" value="ThiC/Bza_core_dom"/>
</dbReference>
<dbReference type="InterPro" id="IPR002817">
    <property type="entry name" value="ThiC/BzaA/B"/>
</dbReference>
<dbReference type="NCBIfam" id="NF006763">
    <property type="entry name" value="PRK09284.1"/>
    <property type="match status" value="1"/>
</dbReference>
<dbReference type="NCBIfam" id="NF009895">
    <property type="entry name" value="PRK13352.1"/>
    <property type="match status" value="1"/>
</dbReference>
<dbReference type="NCBIfam" id="TIGR00190">
    <property type="entry name" value="thiC"/>
    <property type="match status" value="1"/>
</dbReference>
<dbReference type="PANTHER" id="PTHR30557:SF1">
    <property type="entry name" value="PHOSPHOMETHYLPYRIMIDINE SYNTHASE, CHLOROPLASTIC"/>
    <property type="match status" value="1"/>
</dbReference>
<dbReference type="PANTHER" id="PTHR30557">
    <property type="entry name" value="THIAMINE BIOSYNTHESIS PROTEIN THIC"/>
    <property type="match status" value="1"/>
</dbReference>
<dbReference type="Pfam" id="PF13667">
    <property type="entry name" value="ThiC-associated"/>
    <property type="match status" value="1"/>
</dbReference>
<dbReference type="Pfam" id="PF01964">
    <property type="entry name" value="ThiC_Rad_SAM"/>
    <property type="match status" value="1"/>
</dbReference>
<dbReference type="SFLD" id="SFLDF00407">
    <property type="entry name" value="phosphomethylpyrimidine_syntha"/>
    <property type="match status" value="1"/>
</dbReference>
<dbReference type="SFLD" id="SFLDG01114">
    <property type="entry name" value="phosphomethylpyrimidine_syntha"/>
    <property type="match status" value="1"/>
</dbReference>
<dbReference type="SFLD" id="SFLDS00113">
    <property type="entry name" value="Radical_SAM_Phosphomethylpyrim"/>
    <property type="match status" value="1"/>
</dbReference>
<sequence length="631" mass="70885">MSATKLTRREQRARAQHFIDTLEGTAFPNSKRIYITGTHPGVRVPMREIQLSPTLIGGSKEQPQYEENEAIPVYDTSGPYGDPQIAINVQQGLAKLRQPWIDARADTEELTVRSSDYTRTRLADDGLDELRFSGLLTPKRAKTGRRVTQLHYARQGIITPEMEFIAIRENMGRERIRSEVLRHQHPGMSFGAHLPENITAEFVRDEVAAGRAIIPANINHPESEPMIIGRNFLVKVNANIGNSAVTSSIEEEVEKLVWSTRWGADTVMDLSTGRYIHETREWILRNSPVPIGTVPIYQALEKVNGIAEDLTWEAFRDTLLEQAEQGVDYFTIHAGVLLRYVPMTAKRLTGIVSRGGSIMAKWCLSHHQENFLYQHFREICEICAAYDVSLSLGDGLRPGSIQDANDEAQFAELHTLGELTKIAWEYDVQVMIEGPGHVPMQMIRRNMTEELEHCHEAPFYTLGPLTTDIAPGYDHFTSGIGAAMIGWFGCAMLCYVTPKEHLGLPNKEDVKQGLITYKIAAHAADLAKGHPGAQIRDNAMSKARFEFRWEDQFNLALDPFTARAYHDETLPQESGKVAHFCSMCGPKFCSMKISQEVRDYAAAQTIEVGMADMSENFRARGGEIYLHKEEA</sequence>
<evidence type="ECO:0000255" key="1">
    <source>
        <dbReference type="HAMAP-Rule" id="MF_00089"/>
    </source>
</evidence>
<accession>Q0SY06</accession>
<reference key="1">
    <citation type="journal article" date="2006" name="BMC Genomics">
        <title>Complete genome sequence of Shigella flexneri 5b and comparison with Shigella flexneri 2a.</title>
        <authorList>
            <person name="Nie H."/>
            <person name="Yang F."/>
            <person name="Zhang X."/>
            <person name="Yang J."/>
            <person name="Chen L."/>
            <person name="Wang J."/>
            <person name="Xiong Z."/>
            <person name="Peng J."/>
            <person name="Sun L."/>
            <person name="Dong J."/>
            <person name="Xue Y."/>
            <person name="Xu X."/>
            <person name="Chen S."/>
            <person name="Yao Z."/>
            <person name="Shen Y."/>
            <person name="Jin Q."/>
        </authorList>
    </citation>
    <scope>NUCLEOTIDE SEQUENCE [LARGE SCALE GENOMIC DNA]</scope>
    <source>
        <strain>8401</strain>
    </source>
</reference>
<organism>
    <name type="scientific">Shigella flexneri serotype 5b (strain 8401)</name>
    <dbReference type="NCBI Taxonomy" id="373384"/>
    <lineage>
        <taxon>Bacteria</taxon>
        <taxon>Pseudomonadati</taxon>
        <taxon>Pseudomonadota</taxon>
        <taxon>Gammaproteobacteria</taxon>
        <taxon>Enterobacterales</taxon>
        <taxon>Enterobacteriaceae</taxon>
        <taxon>Shigella</taxon>
    </lineage>
</organism>
<protein>
    <recommendedName>
        <fullName evidence="1">Phosphomethylpyrimidine synthase</fullName>
        <ecNumber evidence="1">4.1.99.17</ecNumber>
    </recommendedName>
    <alternativeName>
        <fullName evidence="1">Hydroxymethylpyrimidine phosphate synthase</fullName>
        <shortName evidence="1">HMP-P synthase</shortName>
        <shortName evidence="1">HMP-phosphate synthase</shortName>
        <shortName evidence="1">HMPP synthase</shortName>
    </alternativeName>
    <alternativeName>
        <fullName evidence="1">Thiamine biosynthesis protein ThiC</fullName>
    </alternativeName>
</protein>
<feature type="chain" id="PRO_1000004803" description="Phosphomethylpyrimidine synthase">
    <location>
        <begin position="1"/>
        <end position="631"/>
    </location>
</feature>
<feature type="binding site" evidence="1">
    <location>
        <position position="239"/>
    </location>
    <ligand>
        <name>substrate</name>
    </ligand>
</feature>
<feature type="binding site" evidence="1">
    <location>
        <position position="268"/>
    </location>
    <ligand>
        <name>substrate</name>
    </ligand>
</feature>
<feature type="binding site" evidence="1">
    <location>
        <position position="297"/>
    </location>
    <ligand>
        <name>substrate</name>
    </ligand>
</feature>
<feature type="binding site" evidence="1">
    <location>
        <position position="333"/>
    </location>
    <ligand>
        <name>substrate</name>
    </ligand>
</feature>
<feature type="binding site" evidence="1">
    <location>
        <begin position="353"/>
        <end position="355"/>
    </location>
    <ligand>
        <name>substrate</name>
    </ligand>
</feature>
<feature type="binding site" evidence="1">
    <location>
        <begin position="394"/>
        <end position="397"/>
    </location>
    <ligand>
        <name>substrate</name>
    </ligand>
</feature>
<feature type="binding site" evidence="1">
    <location>
        <position position="433"/>
    </location>
    <ligand>
        <name>substrate</name>
    </ligand>
</feature>
<feature type="binding site" evidence="1">
    <location>
        <position position="437"/>
    </location>
    <ligand>
        <name>Zn(2+)</name>
        <dbReference type="ChEBI" id="CHEBI:29105"/>
    </ligand>
</feature>
<feature type="binding site" evidence="1">
    <location>
        <position position="460"/>
    </location>
    <ligand>
        <name>substrate</name>
    </ligand>
</feature>
<feature type="binding site" evidence="1">
    <location>
        <position position="501"/>
    </location>
    <ligand>
        <name>Zn(2+)</name>
        <dbReference type="ChEBI" id="CHEBI:29105"/>
    </ligand>
</feature>
<feature type="binding site" evidence="1">
    <location>
        <position position="581"/>
    </location>
    <ligand>
        <name>[4Fe-4S] cluster</name>
        <dbReference type="ChEBI" id="CHEBI:49883"/>
        <note>4Fe-4S-S-AdoMet</note>
    </ligand>
</feature>
<feature type="binding site" evidence="1">
    <location>
        <position position="584"/>
    </location>
    <ligand>
        <name>[4Fe-4S] cluster</name>
        <dbReference type="ChEBI" id="CHEBI:49883"/>
        <note>4Fe-4S-S-AdoMet</note>
    </ligand>
</feature>
<feature type="binding site" evidence="1">
    <location>
        <position position="589"/>
    </location>
    <ligand>
        <name>[4Fe-4S] cluster</name>
        <dbReference type="ChEBI" id="CHEBI:49883"/>
        <note>4Fe-4S-S-AdoMet</note>
    </ligand>
</feature>
<name>THIC_SHIF8</name>